<keyword id="KW-0949">S-adenosyl-L-methionine</keyword>
<keyword id="KW-0808">Transferase</keyword>
<reference key="1">
    <citation type="journal article" date="1999" name="Plant Physiol.">
        <title>Cloning of nicotianamine synthase genes, novel genes involved in the biosynthesis of phytosiderophores.</title>
        <authorList>
            <person name="Higuchi K."/>
            <person name="Suzuki K."/>
            <person name="Nakanishi H."/>
            <person name="Yamaguchi H."/>
            <person name="Nishizawa N.-K."/>
            <person name="Mori S."/>
        </authorList>
    </citation>
    <scope>NUCLEOTIDE SEQUENCE [MRNA]</scope>
    <source>
        <strain>cv. Ehimehadaka No.1</strain>
        <tissue>Root</tissue>
    </source>
</reference>
<protein>
    <recommendedName>
        <fullName>Probable nicotianamine synthase 6</fullName>
        <ecNumber>2.5.1.43</ecNumber>
    </recommendedName>
    <alternativeName>
        <fullName>HvNAS6</fullName>
    </alternativeName>
    <alternativeName>
        <fullName>S-adenosyl-L-methionine:S-adenosyl-L-methionine:S-adenosyl-methionine 3-amino-3-carboxypropyltransferase 6</fullName>
    </alternativeName>
</protein>
<proteinExistence type="evidence at transcript level"/>
<accession>Q9ZQV3</accession>
<feature type="chain" id="PRO_0000212709" description="Probable nicotianamine synthase 6">
    <location>
        <begin position="1"/>
        <end position="328"/>
    </location>
</feature>
<name>NAS6_HORVU</name>
<evidence type="ECO:0000250" key="1"/>
<evidence type="ECO:0000305" key="2"/>
<gene>
    <name type="primary">NAS6</name>
</gene>
<sequence>MDAQNKEVDALVQKITGLHAAIAKLPSLSPSPDVDALFTDLVTACVPPSPVDVTKLGSEAQEMREGLIRLCSEAEGKLEAHYSDMLAAFDNPLDHLGMFPYYSNYINLSKLEYELLARYVPGGIARPAVAFIGSGPLPFSSYVLAARHLPDAMFDNYDLCSAANDRASKLFRADKDVGARMSFHTADVADLTRELAAYDVVFLAALVGMAAEDKAKVIPHLGAHMADGAALVVRSAQARGFLYPIVDPQDIGRGGFEVLAVCHPDDDVVNSVIIAHKSKDVHANERPNGRGGQYRGAVPVVSPPCRFGEMVADVTHKREEFTNAEVAF</sequence>
<organism>
    <name type="scientific">Hordeum vulgare</name>
    <name type="common">Barley</name>
    <dbReference type="NCBI Taxonomy" id="4513"/>
    <lineage>
        <taxon>Eukaryota</taxon>
        <taxon>Viridiplantae</taxon>
        <taxon>Streptophyta</taxon>
        <taxon>Embryophyta</taxon>
        <taxon>Tracheophyta</taxon>
        <taxon>Spermatophyta</taxon>
        <taxon>Magnoliopsida</taxon>
        <taxon>Liliopsida</taxon>
        <taxon>Poales</taxon>
        <taxon>Poaceae</taxon>
        <taxon>BOP clade</taxon>
        <taxon>Pooideae</taxon>
        <taxon>Triticodae</taxon>
        <taxon>Triticeae</taxon>
        <taxon>Hordeinae</taxon>
        <taxon>Hordeum</taxon>
    </lineage>
</organism>
<dbReference type="EC" id="2.5.1.43"/>
<dbReference type="EMBL" id="AB011269">
    <property type="protein sequence ID" value="BAA74586.1"/>
    <property type="molecule type" value="mRNA"/>
</dbReference>
<dbReference type="SMR" id="Q9ZQV3"/>
<dbReference type="BRENDA" id="2.5.1.43">
    <property type="organism ID" value="2687"/>
</dbReference>
<dbReference type="GO" id="GO:0030410">
    <property type="term" value="F:nicotianamine synthase activity"/>
    <property type="evidence" value="ECO:0007669"/>
    <property type="project" value="UniProtKB-EC"/>
</dbReference>
<dbReference type="GO" id="GO:0030418">
    <property type="term" value="P:nicotianamine biosynthetic process"/>
    <property type="evidence" value="ECO:0007669"/>
    <property type="project" value="InterPro"/>
</dbReference>
<dbReference type="Gene3D" id="3.40.50.150">
    <property type="entry name" value="Vaccinia Virus protein VP39"/>
    <property type="match status" value="1"/>
</dbReference>
<dbReference type="InterPro" id="IPR004298">
    <property type="entry name" value="Nicotian_synth"/>
</dbReference>
<dbReference type="InterPro" id="IPR029063">
    <property type="entry name" value="SAM-dependent_MTases_sf"/>
</dbReference>
<dbReference type="PANTHER" id="PTHR32266:SF23">
    <property type="entry name" value="NICOTIANAMINE SYNTHASE"/>
    <property type="match status" value="1"/>
</dbReference>
<dbReference type="PANTHER" id="PTHR32266">
    <property type="entry name" value="NICOTIANAMINE SYNTHASE 3"/>
    <property type="match status" value="1"/>
</dbReference>
<dbReference type="Pfam" id="PF03059">
    <property type="entry name" value="NAS"/>
    <property type="match status" value="1"/>
</dbReference>
<dbReference type="SUPFAM" id="SSF53335">
    <property type="entry name" value="S-adenosyl-L-methionine-dependent methyltransferases"/>
    <property type="match status" value="1"/>
</dbReference>
<dbReference type="PROSITE" id="PS51142">
    <property type="entry name" value="NAS"/>
    <property type="match status" value="1"/>
</dbReference>
<comment type="function">
    <text evidence="1">Synthesizes nicotianamine, a polyamine that is the first intermediate in the synthesis of the phytosiderophores of the mugineic acid type found in gramineae which serves as a sensor for the physiological iron status within the plant, and/or might be involved in the transport of iron.</text>
</comment>
<comment type="catalytic activity">
    <reaction>
        <text>3 S-adenosyl-L-methionine = nicotianamine + 3 S-methyl-5'-thioadenosine + 3 H(+)</text>
        <dbReference type="Rhea" id="RHEA:16481"/>
        <dbReference type="ChEBI" id="CHEBI:15378"/>
        <dbReference type="ChEBI" id="CHEBI:17509"/>
        <dbReference type="ChEBI" id="CHEBI:58249"/>
        <dbReference type="ChEBI" id="CHEBI:59789"/>
        <dbReference type="EC" id="2.5.1.43"/>
    </reaction>
</comment>
<comment type="similarity">
    <text evidence="2">Belongs to the nicotianamine synthase (NAS)-like family.</text>
</comment>